<dbReference type="EC" id="7.1.1.3" evidence="2"/>
<dbReference type="EMBL" id="AE014075">
    <property type="protein sequence ID" value="AAN79020.1"/>
    <property type="molecule type" value="Genomic_DNA"/>
</dbReference>
<dbReference type="RefSeq" id="WP_000467180.1">
    <property type="nucleotide sequence ID" value="NZ_CP051263.1"/>
</dbReference>
<dbReference type="SMR" id="P0ABI9"/>
<dbReference type="STRING" id="199310.c0542"/>
<dbReference type="GeneID" id="93777023"/>
<dbReference type="KEGG" id="ecc:c0542"/>
<dbReference type="eggNOG" id="COG0843">
    <property type="taxonomic scope" value="Bacteria"/>
</dbReference>
<dbReference type="HOGENOM" id="CLU_011899_7_1_6"/>
<dbReference type="BioCyc" id="ECOL199310:C0542-MONOMER"/>
<dbReference type="Proteomes" id="UP000001410">
    <property type="component" value="Chromosome"/>
</dbReference>
<dbReference type="GO" id="GO:0005886">
    <property type="term" value="C:plasma membrane"/>
    <property type="evidence" value="ECO:0007669"/>
    <property type="project" value="UniProtKB-SubCell"/>
</dbReference>
<dbReference type="GO" id="GO:0009486">
    <property type="term" value="F:cytochrome bo3 ubiquinol oxidase activity"/>
    <property type="evidence" value="ECO:0007669"/>
    <property type="project" value="UniProtKB-EC"/>
</dbReference>
<dbReference type="GO" id="GO:0004129">
    <property type="term" value="F:cytochrome-c oxidase activity"/>
    <property type="evidence" value="ECO:0007669"/>
    <property type="project" value="InterPro"/>
</dbReference>
<dbReference type="GO" id="GO:0020037">
    <property type="term" value="F:heme binding"/>
    <property type="evidence" value="ECO:0007669"/>
    <property type="project" value="InterPro"/>
</dbReference>
<dbReference type="GO" id="GO:0046872">
    <property type="term" value="F:metal ion binding"/>
    <property type="evidence" value="ECO:0007669"/>
    <property type="project" value="UniProtKB-KW"/>
</dbReference>
<dbReference type="GO" id="GO:0016682">
    <property type="term" value="F:oxidoreductase activity, acting on diphenols and related substances as donors, oxygen as acceptor"/>
    <property type="evidence" value="ECO:0007669"/>
    <property type="project" value="InterPro"/>
</dbReference>
<dbReference type="GO" id="GO:0009060">
    <property type="term" value="P:aerobic respiration"/>
    <property type="evidence" value="ECO:0007669"/>
    <property type="project" value="InterPro"/>
</dbReference>
<dbReference type="GO" id="GO:0015990">
    <property type="term" value="P:electron transport coupled proton transport"/>
    <property type="evidence" value="ECO:0007669"/>
    <property type="project" value="TreeGrafter"/>
</dbReference>
<dbReference type="GO" id="GO:0022904">
    <property type="term" value="P:respiratory electron transport chain"/>
    <property type="evidence" value="ECO:0007669"/>
    <property type="project" value="TreeGrafter"/>
</dbReference>
<dbReference type="CDD" id="cd01662">
    <property type="entry name" value="Ubiquinol_Oxidase_I"/>
    <property type="match status" value="1"/>
</dbReference>
<dbReference type="FunFam" id="1.20.210.10:FF:000002">
    <property type="entry name" value="Cytochrome o ubiquinol oxidase, subunit I"/>
    <property type="match status" value="1"/>
</dbReference>
<dbReference type="Gene3D" id="1.20.210.10">
    <property type="entry name" value="Cytochrome c oxidase-like, subunit I domain"/>
    <property type="match status" value="1"/>
</dbReference>
<dbReference type="InterPro" id="IPR023616">
    <property type="entry name" value="Cyt_c_oxase-like_su1_dom"/>
</dbReference>
<dbReference type="InterPro" id="IPR036927">
    <property type="entry name" value="Cyt_c_oxase-like_su1_sf"/>
</dbReference>
<dbReference type="InterPro" id="IPR000883">
    <property type="entry name" value="Cyt_C_Oxase_1"/>
</dbReference>
<dbReference type="InterPro" id="IPR023615">
    <property type="entry name" value="Cyt_c_Oxase_su1_BS"/>
</dbReference>
<dbReference type="InterPro" id="IPR014207">
    <property type="entry name" value="Cyt_c_ubiqinol_oxidase_su1"/>
</dbReference>
<dbReference type="NCBIfam" id="TIGR02843">
    <property type="entry name" value="CyoB"/>
    <property type="match status" value="1"/>
</dbReference>
<dbReference type="NCBIfam" id="NF011592">
    <property type="entry name" value="PRK15017.1"/>
    <property type="match status" value="1"/>
</dbReference>
<dbReference type="PANTHER" id="PTHR10422:SF35">
    <property type="entry name" value="CYTOCHROME BO(3) UBIQUINOL OXIDASE SUBUNIT 1"/>
    <property type="match status" value="1"/>
</dbReference>
<dbReference type="PANTHER" id="PTHR10422">
    <property type="entry name" value="CYTOCHROME C OXIDASE SUBUNIT 1"/>
    <property type="match status" value="1"/>
</dbReference>
<dbReference type="Pfam" id="PF00115">
    <property type="entry name" value="COX1"/>
    <property type="match status" value="1"/>
</dbReference>
<dbReference type="PRINTS" id="PR01165">
    <property type="entry name" value="CYCOXIDASEI"/>
</dbReference>
<dbReference type="SUPFAM" id="SSF81442">
    <property type="entry name" value="Cytochrome c oxidase subunit I-like"/>
    <property type="match status" value="1"/>
</dbReference>
<dbReference type="PROSITE" id="PS50855">
    <property type="entry name" value="COX1"/>
    <property type="match status" value="1"/>
</dbReference>
<dbReference type="PROSITE" id="PS00077">
    <property type="entry name" value="COX1_CUB"/>
    <property type="match status" value="1"/>
</dbReference>
<evidence type="ECO:0000250" key="1"/>
<evidence type="ECO:0000250" key="2">
    <source>
        <dbReference type="UniProtKB" id="P0ABI8"/>
    </source>
</evidence>
<evidence type="ECO:0000305" key="3"/>
<sequence>MFGKLSLDAVPFHEPIVMVTIAGIILGGLALVGLITYFGKWTYLWKEWLTSVDHKRLGIMYIIVAIVMLLRGFADAIMMRSQQALASAGEAGFLPPHHYDQIFTAHGVIMIFFVAMPFVIGLMNLVVPLQIGARDVAFPFLNNLSFWFTVVGVILVNVSLGVGEFAQTGWLAYPPLSGIEYSPGVGVDYWIWSLQLSGIGTTLTGINFFVTILKMRAPGMTMFKMPVFTWASLCANVLIIASFPILTVTVALLTLDRYLGTHFFTNDMGGNMMMYINLIWAWGHPEVYILILPVFGVFSEIAATFSRKRLFGYTSLVWATVCITVLSFIVWLHHFFTMGAGANVNAFFGITTMIIAIPTGVKIFNWLFTMYQGRIVFHSAMLWTIGFIVTFSVGGMTGVLLAVPGADFVLHNSLFLIAHFHNVIIGGVVFGCFAGMTYWWPKAFGFKLNETWGKRAFWFWIIGFFVAFMPLYALGFMGMTRRLSQQIDPQFHTMLMIAASGAVLIALGILCLVIQMYVSIRDRDQNRDLTGDPWGGRTLEWATSSPPPFYNFAVVPHVHERDAFWEMKEKGEAYKKPDHYEEIHMPKNSGAGIVIAAFSTIFGFAMIWHIWWLAIVGFAGMIITWIVKSFDEDVDYYVPVAEIEKLENQHFDEITKAGLKNGN</sequence>
<gene>
    <name type="primary">cyoB</name>
    <name type="ordered locus">c0542</name>
</gene>
<reference key="1">
    <citation type="journal article" date="2002" name="Proc. Natl. Acad. Sci. U.S.A.">
        <title>Extensive mosaic structure revealed by the complete genome sequence of uropathogenic Escherichia coli.</title>
        <authorList>
            <person name="Welch R.A."/>
            <person name="Burland V."/>
            <person name="Plunkett G. III"/>
            <person name="Redford P."/>
            <person name="Roesch P."/>
            <person name="Rasko D."/>
            <person name="Buckles E.L."/>
            <person name="Liou S.-R."/>
            <person name="Boutin A."/>
            <person name="Hackett J."/>
            <person name="Stroud D."/>
            <person name="Mayhew G.F."/>
            <person name="Rose D.J."/>
            <person name="Zhou S."/>
            <person name="Schwartz D.C."/>
            <person name="Perna N.T."/>
            <person name="Mobley H.L.T."/>
            <person name="Donnenberg M.S."/>
            <person name="Blattner F.R."/>
        </authorList>
    </citation>
    <scope>NUCLEOTIDE SEQUENCE [LARGE SCALE GENOMIC DNA]</scope>
    <source>
        <strain>CFT073 / ATCC 700928 / UPEC</strain>
    </source>
</reference>
<organism>
    <name type="scientific">Escherichia coli O6:H1 (strain CFT073 / ATCC 700928 / UPEC)</name>
    <dbReference type="NCBI Taxonomy" id="199310"/>
    <lineage>
        <taxon>Bacteria</taxon>
        <taxon>Pseudomonadati</taxon>
        <taxon>Pseudomonadota</taxon>
        <taxon>Gammaproteobacteria</taxon>
        <taxon>Enterobacterales</taxon>
        <taxon>Enterobacteriaceae</taxon>
        <taxon>Escherichia</taxon>
    </lineage>
</organism>
<name>CYOB_ECOL6</name>
<proteinExistence type="inferred from homology"/>
<comment type="function">
    <text evidence="2">Cytochrome bo(3) ubiquinol oxidase is the terminal enzyme in the aerobic respiratory chain of E.coli that predominates when cells are grown at high aeration. Catalyzes the four-electron reduction of O2 to water, using a ubiquinol as a membrane soluble electron donor for molecular oxygen reduction; ubiquinol-8 is the natural substrate for E.coli. Has proton pump activity across the membrane in addition to electron transfer, pumping 2 protons/electron and generating a proton motive force. All the redox centers of this enzyme complex are located within the largest subunit, subunit I. Protons are probably pumped via D- and K- channels found in this subunit.</text>
</comment>
<comment type="catalytic activity">
    <reaction evidence="2">
        <text>2 a ubiquinol + O2 + n H(+)(in) = 2 a ubiquinone + 2 H2O + n H(+)(out)</text>
        <dbReference type="Rhea" id="RHEA:30251"/>
        <dbReference type="Rhea" id="RHEA-COMP:9565"/>
        <dbReference type="Rhea" id="RHEA-COMP:9566"/>
        <dbReference type="ChEBI" id="CHEBI:15377"/>
        <dbReference type="ChEBI" id="CHEBI:15378"/>
        <dbReference type="ChEBI" id="CHEBI:15379"/>
        <dbReference type="ChEBI" id="CHEBI:16389"/>
        <dbReference type="ChEBI" id="CHEBI:17976"/>
        <dbReference type="EC" id="7.1.1.3"/>
    </reaction>
</comment>
<comment type="cofactor">
    <cofactor evidence="2">
        <name>Cu(2+)</name>
        <dbReference type="ChEBI" id="CHEBI:29036"/>
    </cofactor>
    <text evidence="2">Binds 1 copper B ion per subunit.</text>
</comment>
<comment type="cofactor">
    <cofactor evidence="2">
        <name>heme b</name>
        <dbReference type="ChEBI" id="CHEBI:60344"/>
    </cofactor>
    <text evidence="2">Binds 1 low-spin heme b per subunit.</text>
</comment>
<comment type="cofactor">
    <cofactor evidence="2">
        <name>Fe(II)-heme o</name>
        <dbReference type="ChEBI" id="CHEBI:60530"/>
    </cofactor>
    <text evidence="2">Binds 1 high-spin heme o per subunit, also named heme o(3).</text>
</comment>
<comment type="subunit">
    <text evidence="2">The cytochrome bo(3) ubiquinol oxidase complex is a heterooctamer of two A chains, two B chains, two C chains and two D chains.</text>
</comment>
<comment type="subcellular location">
    <subcellularLocation>
        <location evidence="1">Cell inner membrane</location>
        <topology evidence="1">Multi-pass membrane protein</topology>
    </subcellularLocation>
</comment>
<comment type="miscellaneous">
    <text>Ubiquinol oxidase catalyzes the terminal step in the electron transport chain.</text>
</comment>
<comment type="similarity">
    <text evidence="3">Belongs to the heme-copper respiratory oxidase family.</text>
</comment>
<feature type="chain" id="PRO_0000183478" description="Cytochrome bo(3) ubiquinol oxidase subunit 1">
    <location>
        <begin position="1"/>
        <end position="663"/>
    </location>
</feature>
<feature type="topological domain" description="Periplasmic" evidence="1">
    <location>
        <begin position="1"/>
        <end position="16"/>
    </location>
</feature>
<feature type="transmembrane region" description="Helical; Name=I" evidence="1">
    <location>
        <begin position="17"/>
        <end position="35"/>
    </location>
</feature>
<feature type="topological domain" description="Cytoplasmic" evidence="1">
    <location>
        <begin position="36"/>
        <end position="52"/>
    </location>
</feature>
<feature type="transmembrane region" description="Helical; Name=II" evidence="1">
    <location>
        <begin position="53"/>
        <end position="80"/>
    </location>
</feature>
<feature type="topological domain" description="Periplasmic" evidence="1">
    <location>
        <begin position="81"/>
        <end position="95"/>
    </location>
</feature>
<feature type="transmembrane region" description="Helical; Name=III" evidence="1">
    <location>
        <begin position="96"/>
        <end position="132"/>
    </location>
</feature>
<feature type="topological domain" description="Cytoplasmic" evidence="1">
    <location>
        <begin position="133"/>
        <end position="137"/>
    </location>
</feature>
<feature type="transmembrane region" description="Helical; Name=IV" evidence="1">
    <location>
        <begin position="138"/>
        <end position="161"/>
    </location>
</feature>
<feature type="topological domain" description="Periplasmic" evidence="1">
    <location>
        <begin position="162"/>
        <end position="184"/>
    </location>
</feature>
<feature type="transmembrane region" description="Helical; Name=V" evidence="1">
    <location>
        <begin position="185"/>
        <end position="215"/>
    </location>
</feature>
<feature type="topological domain" description="Cytoplasmic" evidence="1">
    <location>
        <begin position="216"/>
        <end position="224"/>
    </location>
</feature>
<feature type="transmembrane region" description="Helical; Name=VI" evidence="1">
    <location>
        <begin position="225"/>
        <end position="260"/>
    </location>
</feature>
<feature type="topological domain" description="Periplasmic" evidence="1">
    <location>
        <begin position="261"/>
        <end position="270"/>
    </location>
</feature>
<feature type="transmembrane region" description="Helical; Name=VII" evidence="1">
    <location>
        <begin position="271"/>
        <end position="307"/>
    </location>
</feature>
<feature type="topological domain" description="Cytoplasmic" evidence="1">
    <location>
        <begin position="308"/>
        <end position="311"/>
    </location>
</feature>
<feature type="transmembrane region" description="Helical; Name=VIII" evidence="1">
    <location>
        <begin position="312"/>
        <end position="326"/>
    </location>
</feature>
<feature type="topological domain" description="Periplasmic" evidence="1">
    <location>
        <begin position="327"/>
        <end position="340"/>
    </location>
</feature>
<feature type="transmembrane region" description="Helical; Name=IX" evidence="1">
    <location>
        <begin position="341"/>
        <end position="369"/>
    </location>
</feature>
<feature type="topological domain" description="Cytoplasmic" evidence="1">
    <location>
        <begin position="370"/>
        <end position="377"/>
    </location>
</feature>
<feature type="transmembrane region" description="Helical; Name=X" evidence="1">
    <location>
        <begin position="378"/>
        <end position="409"/>
    </location>
</feature>
<feature type="topological domain" description="Periplasmic" evidence="1">
    <location>
        <begin position="410"/>
        <end position="412"/>
    </location>
</feature>
<feature type="transmembrane region" description="Helical; Name=XI" evidence="1">
    <location>
        <begin position="413"/>
        <end position="445"/>
    </location>
</feature>
<feature type="topological domain" description="Cytoplasmic" evidence="1">
    <location>
        <begin position="446"/>
        <end position="448"/>
    </location>
</feature>
<feature type="transmembrane region" description="Helical; Name=XII" evidence="1">
    <location>
        <begin position="449"/>
        <end position="477"/>
    </location>
</feature>
<feature type="topological domain" description="Periplasmic" evidence="1">
    <location>
        <begin position="478"/>
        <end position="489"/>
    </location>
</feature>
<feature type="transmembrane region" description="Helical; Name=XIII" evidence="1">
    <location>
        <begin position="490"/>
        <end position="521"/>
    </location>
</feature>
<feature type="topological domain" description="Cytoplasmic" evidence="1">
    <location>
        <begin position="522"/>
        <end position="587"/>
    </location>
</feature>
<feature type="transmembrane region" description="Helical; Name=XIV" evidence="1">
    <location>
        <begin position="588"/>
        <end position="606"/>
    </location>
</feature>
<feature type="topological domain" description="Periplasmic" evidence="1">
    <location>
        <begin position="607"/>
        <end position="613"/>
    </location>
</feature>
<feature type="transmembrane region" description="Helical; Name=XV" evidence="1">
    <location>
        <begin position="614"/>
        <end position="632"/>
    </location>
</feature>
<feature type="topological domain" description="Cytoplasmic" evidence="1">
    <location>
        <begin position="633"/>
        <end position="663"/>
    </location>
</feature>
<feature type="binding site" evidence="2">
    <location>
        <position position="71"/>
    </location>
    <ligand>
        <name>ubiquinone-8</name>
        <dbReference type="ChEBI" id="CHEBI:61683"/>
    </ligand>
</feature>
<feature type="binding site" evidence="2">
    <location>
        <position position="75"/>
    </location>
    <ligand>
        <name>ubiquinone-8</name>
        <dbReference type="ChEBI" id="CHEBI:61683"/>
    </ligand>
</feature>
<feature type="binding site" evidence="2">
    <location>
        <position position="98"/>
    </location>
    <ligand>
        <name>ubiquinone-8</name>
        <dbReference type="ChEBI" id="CHEBI:61683"/>
    </ligand>
</feature>
<feature type="binding site" description="axial binding residue" evidence="2">
    <location>
        <position position="106"/>
    </location>
    <ligand>
        <name>heme b</name>
        <dbReference type="ChEBI" id="CHEBI:60344"/>
    </ligand>
    <ligandPart>
        <name>Fe</name>
        <dbReference type="ChEBI" id="CHEBI:18248"/>
    </ligandPart>
</feature>
<feature type="binding site" evidence="2">
    <location>
        <position position="170"/>
    </location>
    <ligand>
        <name>heme b</name>
        <dbReference type="ChEBI" id="CHEBI:60344"/>
    </ligand>
</feature>
<feature type="binding site" evidence="2">
    <location>
        <position position="284"/>
    </location>
    <ligand>
        <name>Cu(2+)</name>
        <dbReference type="ChEBI" id="CHEBI:29036"/>
    </ligand>
</feature>
<feature type="binding site" evidence="2">
    <location>
        <position position="288"/>
    </location>
    <ligand>
        <name>Fe(II)-heme o</name>
        <dbReference type="ChEBI" id="CHEBI:60530"/>
    </ligand>
</feature>
<feature type="binding site" evidence="2">
    <location>
        <position position="333"/>
    </location>
    <ligand>
        <name>Cu(2+)</name>
        <dbReference type="ChEBI" id="CHEBI:29036"/>
    </ligand>
</feature>
<feature type="binding site" evidence="2">
    <location>
        <position position="334"/>
    </location>
    <ligand>
        <name>Cu(2+)</name>
        <dbReference type="ChEBI" id="CHEBI:29036"/>
    </ligand>
</feature>
<feature type="binding site" evidence="2">
    <location>
        <position position="411"/>
    </location>
    <ligand>
        <name>Fe(II)-heme o</name>
        <dbReference type="ChEBI" id="CHEBI:60530"/>
    </ligand>
</feature>
<feature type="binding site" description="axial binding residue" evidence="2">
    <location>
        <position position="419"/>
    </location>
    <ligand>
        <name>Fe(II)-heme o</name>
        <dbReference type="ChEBI" id="CHEBI:60530"/>
    </ligand>
    <ligandPart>
        <name>Fe</name>
        <dbReference type="ChEBI" id="CHEBI:18248"/>
    </ligandPart>
</feature>
<feature type="binding site" description="axial binding residue" evidence="2">
    <location>
        <position position="421"/>
    </location>
    <ligand>
        <name>heme b</name>
        <dbReference type="ChEBI" id="CHEBI:60344"/>
    </ligand>
    <ligandPart>
        <name>Fe</name>
        <dbReference type="ChEBI" id="CHEBI:18248"/>
    </ligandPart>
</feature>
<feature type="binding site" evidence="2">
    <location>
        <position position="481"/>
    </location>
    <ligand>
        <name>heme b</name>
        <dbReference type="ChEBI" id="CHEBI:60344"/>
    </ligand>
</feature>
<feature type="binding site" evidence="2">
    <location>
        <position position="482"/>
    </location>
    <ligand>
        <name>heme b</name>
        <dbReference type="ChEBI" id="CHEBI:60344"/>
    </ligand>
</feature>
<feature type="cross-link" description="1'-histidyl-3'-tyrosine (His-Tyr)" evidence="1">
    <location>
        <begin position="284"/>
        <end position="288"/>
    </location>
</feature>
<protein>
    <recommendedName>
        <fullName>Cytochrome bo(3) ubiquinol oxidase subunit 1</fullName>
        <ecNumber evidence="2">7.1.1.3</ecNumber>
    </recommendedName>
    <alternativeName>
        <fullName>Cytochrome o ubiquinol oxidase subunit 1</fullName>
        <shortName>Cytochrome o subunit 1</shortName>
    </alternativeName>
    <alternativeName>
        <fullName>Oxidase bo(3) subunit 1</fullName>
    </alternativeName>
    <alternativeName>
        <fullName>Ubiquinol oxidase chain A</fullName>
    </alternativeName>
    <alternativeName>
        <fullName>Ubiquinol oxidase polypeptide I</fullName>
    </alternativeName>
    <alternativeName>
        <fullName>Ubiquinol oxidase subunit 1</fullName>
    </alternativeName>
</protein>
<keyword id="KW-0997">Cell inner membrane</keyword>
<keyword id="KW-1003">Cell membrane</keyword>
<keyword id="KW-0186">Copper</keyword>
<keyword id="KW-0249">Electron transport</keyword>
<keyword id="KW-0349">Heme</keyword>
<keyword id="KW-0375">Hydrogen ion transport</keyword>
<keyword id="KW-0406">Ion transport</keyword>
<keyword id="KW-0408">Iron</keyword>
<keyword id="KW-0472">Membrane</keyword>
<keyword id="KW-0479">Metal-binding</keyword>
<keyword id="KW-1185">Reference proteome</keyword>
<keyword id="KW-0679">Respiratory chain</keyword>
<keyword id="KW-1278">Translocase</keyword>
<keyword id="KW-0812">Transmembrane</keyword>
<keyword id="KW-1133">Transmembrane helix</keyword>
<keyword id="KW-0813">Transport</keyword>
<accession>P0ABI9</accession>
<accession>P18401</accession>